<name>COX2_ACOIG</name>
<keyword id="KW-0186">Copper</keyword>
<keyword id="KW-0249">Electron transport</keyword>
<keyword id="KW-0460">Magnesium</keyword>
<keyword id="KW-0472">Membrane</keyword>
<keyword id="KW-0479">Metal-binding</keyword>
<keyword id="KW-0496">Mitochondrion</keyword>
<keyword id="KW-0999">Mitochondrion inner membrane</keyword>
<keyword id="KW-0679">Respiratory chain</keyword>
<keyword id="KW-1278">Translocase</keyword>
<keyword id="KW-0812">Transmembrane</keyword>
<keyword id="KW-1133">Transmembrane helix</keyword>
<keyword id="KW-0813">Transport</keyword>
<gene>
    <name type="primary">MT-CO2</name>
    <name type="synonym">COII</name>
    <name type="synonym">COXII</name>
    <name type="synonym">MTCO2</name>
</gene>
<organism>
    <name type="scientific">Acomys ignitus</name>
    <name type="common">Fiery spiny mouse</name>
    <dbReference type="NCBI Taxonomy" id="60745"/>
    <lineage>
        <taxon>Eukaryota</taxon>
        <taxon>Metazoa</taxon>
        <taxon>Chordata</taxon>
        <taxon>Craniata</taxon>
        <taxon>Vertebrata</taxon>
        <taxon>Euteleostomi</taxon>
        <taxon>Mammalia</taxon>
        <taxon>Eutheria</taxon>
        <taxon>Euarchontoglires</taxon>
        <taxon>Glires</taxon>
        <taxon>Rodentia</taxon>
        <taxon>Myomorpha</taxon>
        <taxon>Muroidea</taxon>
        <taxon>Muridae</taxon>
        <taxon>Deomyinae</taxon>
        <taxon>Acomys</taxon>
    </lineage>
</organism>
<geneLocation type="mitochondrion"/>
<evidence type="ECO:0000250" key="1">
    <source>
        <dbReference type="UniProtKB" id="P00403"/>
    </source>
</evidence>
<evidence type="ECO:0000250" key="2">
    <source>
        <dbReference type="UniProtKB" id="P00410"/>
    </source>
</evidence>
<evidence type="ECO:0000250" key="3">
    <source>
        <dbReference type="UniProtKB" id="P68530"/>
    </source>
</evidence>
<evidence type="ECO:0000305" key="4"/>
<dbReference type="EC" id="7.1.1.9"/>
<dbReference type="EMBL" id="DQ019086">
    <property type="protein sequence ID" value="ABA28350.1"/>
    <property type="molecule type" value="Genomic_DNA"/>
</dbReference>
<dbReference type="SMR" id="Q38S50"/>
<dbReference type="GO" id="GO:0005743">
    <property type="term" value="C:mitochondrial inner membrane"/>
    <property type="evidence" value="ECO:0007669"/>
    <property type="project" value="UniProtKB-SubCell"/>
</dbReference>
<dbReference type="GO" id="GO:0045277">
    <property type="term" value="C:respiratory chain complex IV"/>
    <property type="evidence" value="ECO:0000250"/>
    <property type="project" value="UniProtKB"/>
</dbReference>
<dbReference type="GO" id="GO:0005507">
    <property type="term" value="F:copper ion binding"/>
    <property type="evidence" value="ECO:0007669"/>
    <property type="project" value="InterPro"/>
</dbReference>
<dbReference type="GO" id="GO:0004129">
    <property type="term" value="F:cytochrome-c oxidase activity"/>
    <property type="evidence" value="ECO:0007669"/>
    <property type="project" value="UniProtKB-EC"/>
</dbReference>
<dbReference type="GO" id="GO:0042773">
    <property type="term" value="P:ATP synthesis coupled electron transport"/>
    <property type="evidence" value="ECO:0007669"/>
    <property type="project" value="TreeGrafter"/>
</dbReference>
<dbReference type="CDD" id="cd13912">
    <property type="entry name" value="CcO_II_C"/>
    <property type="match status" value="1"/>
</dbReference>
<dbReference type="FunFam" id="1.10.287.90:FF:000001">
    <property type="entry name" value="Cytochrome c oxidase subunit 2"/>
    <property type="match status" value="1"/>
</dbReference>
<dbReference type="FunFam" id="2.60.40.420:FF:000001">
    <property type="entry name" value="Cytochrome c oxidase subunit 2"/>
    <property type="match status" value="1"/>
</dbReference>
<dbReference type="Gene3D" id="1.10.287.90">
    <property type="match status" value="1"/>
</dbReference>
<dbReference type="Gene3D" id="2.60.40.420">
    <property type="entry name" value="Cupredoxins - blue copper proteins"/>
    <property type="match status" value="1"/>
</dbReference>
<dbReference type="InterPro" id="IPR045187">
    <property type="entry name" value="CcO_II"/>
</dbReference>
<dbReference type="InterPro" id="IPR002429">
    <property type="entry name" value="CcO_II-like_C"/>
</dbReference>
<dbReference type="InterPro" id="IPR034210">
    <property type="entry name" value="CcO_II_C"/>
</dbReference>
<dbReference type="InterPro" id="IPR001505">
    <property type="entry name" value="Copper_CuA"/>
</dbReference>
<dbReference type="InterPro" id="IPR008972">
    <property type="entry name" value="Cupredoxin"/>
</dbReference>
<dbReference type="InterPro" id="IPR014222">
    <property type="entry name" value="Cyt_c_oxidase_su2"/>
</dbReference>
<dbReference type="InterPro" id="IPR011759">
    <property type="entry name" value="Cyt_c_oxidase_su2_TM_dom"/>
</dbReference>
<dbReference type="InterPro" id="IPR036257">
    <property type="entry name" value="Cyt_c_oxidase_su2_TM_sf"/>
</dbReference>
<dbReference type="NCBIfam" id="TIGR02866">
    <property type="entry name" value="CoxB"/>
    <property type="match status" value="1"/>
</dbReference>
<dbReference type="PANTHER" id="PTHR22888:SF9">
    <property type="entry name" value="CYTOCHROME C OXIDASE SUBUNIT 2"/>
    <property type="match status" value="1"/>
</dbReference>
<dbReference type="PANTHER" id="PTHR22888">
    <property type="entry name" value="CYTOCHROME C OXIDASE, SUBUNIT II"/>
    <property type="match status" value="1"/>
</dbReference>
<dbReference type="Pfam" id="PF00116">
    <property type="entry name" value="COX2"/>
    <property type="match status" value="1"/>
</dbReference>
<dbReference type="Pfam" id="PF02790">
    <property type="entry name" value="COX2_TM"/>
    <property type="match status" value="1"/>
</dbReference>
<dbReference type="PRINTS" id="PR01166">
    <property type="entry name" value="CYCOXIDASEII"/>
</dbReference>
<dbReference type="SUPFAM" id="SSF49503">
    <property type="entry name" value="Cupredoxins"/>
    <property type="match status" value="1"/>
</dbReference>
<dbReference type="SUPFAM" id="SSF81464">
    <property type="entry name" value="Cytochrome c oxidase subunit II-like, transmembrane region"/>
    <property type="match status" value="1"/>
</dbReference>
<dbReference type="PROSITE" id="PS00078">
    <property type="entry name" value="COX2"/>
    <property type="match status" value="1"/>
</dbReference>
<dbReference type="PROSITE" id="PS50857">
    <property type="entry name" value="COX2_CUA"/>
    <property type="match status" value="1"/>
</dbReference>
<dbReference type="PROSITE" id="PS50999">
    <property type="entry name" value="COX2_TM"/>
    <property type="match status" value="1"/>
</dbReference>
<reference key="1">
    <citation type="journal article" date="2005" name="Mol. Phylogenet. Evol.">
        <title>Multigene phylogeny of the Old World mice, Murinae, reveals distinct geographic lineages and the declining utility of mitochondrial genes compared to nuclear genes.</title>
        <authorList>
            <person name="Steppan S.J."/>
            <person name="Adkins R.M."/>
            <person name="Spinks P.Q."/>
            <person name="Hale C."/>
        </authorList>
    </citation>
    <scope>NUCLEOTIDE SEQUENCE [GENOMIC DNA]</scope>
</reference>
<proteinExistence type="inferred from homology"/>
<protein>
    <recommendedName>
        <fullName>Cytochrome c oxidase subunit 2</fullName>
        <ecNumber>7.1.1.9</ecNumber>
    </recommendedName>
    <alternativeName>
        <fullName>Cytochrome c oxidase polypeptide II</fullName>
    </alternativeName>
</protein>
<sequence length="227" mass="25739">MAYPLQLGLQDATSPIMEELTSFHDHTLMIVFLISSLVLYIISSMLTTKMTHTNTMDAQGVETIWTILPAAILVLIALPSLRILYMMDEINNPALTVKTMGHQWYWSYEYTDYEDLYFDSYMTPTSDLKPGELRLLEVDNRVVLPMELPIRMLISSEDVLHSWAVPSLGLKTDAIPGRLNQATISSNRPGLFYGQCSEICGSNHSFMPIVLEMVPLKHFENWSASMI</sequence>
<comment type="function">
    <text evidence="2">Component of the cytochrome c oxidase, the last enzyme in the mitochondrial electron transport chain which drives oxidative phosphorylation. The respiratory chain contains 3 multisubunit complexes succinate dehydrogenase (complex II, CII), ubiquinol-cytochrome c oxidoreductase (cytochrome b-c1 complex, complex III, CIII) and cytochrome c oxidase (complex IV, CIV), that cooperate to transfer electrons derived from NADH and succinate to molecular oxygen, creating an electrochemical gradient over the inner membrane that drives transmembrane transport and the ATP synthase. Cytochrome c oxidase is the component of the respiratory chain that catalyzes the reduction of oxygen to water. Electrons originating from reduced cytochrome c in the intermembrane space (IMS) are transferred via the dinuclear copper A center (CU(A)) of subunit 2 and heme A of subunit 1 to the active site in subunit 1, a binuclear center (BNC) formed by heme A3 and copper B (CU(B)). The BNC reduces molecular oxygen to 2 water molecules using 4 electrons from cytochrome c in the IMS and 4 protons from the mitochondrial matrix.</text>
</comment>
<comment type="catalytic activity">
    <reaction evidence="2">
        <text>4 Fe(II)-[cytochrome c] + O2 + 8 H(+)(in) = 4 Fe(III)-[cytochrome c] + 2 H2O + 4 H(+)(out)</text>
        <dbReference type="Rhea" id="RHEA:11436"/>
        <dbReference type="Rhea" id="RHEA-COMP:10350"/>
        <dbReference type="Rhea" id="RHEA-COMP:14399"/>
        <dbReference type="ChEBI" id="CHEBI:15377"/>
        <dbReference type="ChEBI" id="CHEBI:15378"/>
        <dbReference type="ChEBI" id="CHEBI:15379"/>
        <dbReference type="ChEBI" id="CHEBI:29033"/>
        <dbReference type="ChEBI" id="CHEBI:29034"/>
        <dbReference type="EC" id="7.1.1.9"/>
    </reaction>
    <physiologicalReaction direction="left-to-right" evidence="2">
        <dbReference type="Rhea" id="RHEA:11437"/>
    </physiologicalReaction>
</comment>
<comment type="cofactor">
    <cofactor evidence="3">
        <name>Cu cation</name>
        <dbReference type="ChEBI" id="CHEBI:23378"/>
    </cofactor>
    <text evidence="3">Binds a dinuclear copper A center per subunit.</text>
</comment>
<comment type="subunit">
    <text evidence="1 3">Component of the cytochrome c oxidase (complex IV, CIV), a multisubunit enzyme composed of 14 subunits. The complex is composed of a catalytic core of 3 subunits MT-CO1, MT-CO2 and MT-CO3, encoded in the mitochondrial DNA, and 11 supernumerary subunits COX4I, COX5A, COX5B, COX6A, COX6B, COX6C, COX7A, COX7B, COX7C, COX8 and NDUFA4, which are encoded in the nuclear genome. The complex exists as a monomer or a dimer and forms supercomplexes (SCs) in the inner mitochondrial membrane with NADH-ubiquinone oxidoreductase (complex I, CI) and ubiquinol-cytochrome c oxidoreductase (cytochrome b-c1 complex, complex III, CIII), resulting in different assemblies (supercomplex SCI(1)III(2)IV(1) and megacomplex MCI(2)III(2)IV(2)) (By similarity). Found in a complex with TMEM177, COA6, COX18, COX20, SCO1 and SCO2. Interacts with TMEM177 in a COX20-dependent manner. Interacts with COX20. Interacts with COX16 (By similarity).</text>
</comment>
<comment type="subcellular location">
    <subcellularLocation>
        <location evidence="3">Mitochondrion inner membrane</location>
        <topology evidence="3">Multi-pass membrane protein</topology>
    </subcellularLocation>
</comment>
<comment type="similarity">
    <text evidence="4">Belongs to the cytochrome c oxidase subunit 2 family.</text>
</comment>
<feature type="chain" id="PRO_0000254911" description="Cytochrome c oxidase subunit 2">
    <location>
        <begin position="1"/>
        <end position="227"/>
    </location>
</feature>
<feature type="topological domain" description="Mitochondrial intermembrane" evidence="3">
    <location>
        <begin position="1"/>
        <end position="14"/>
    </location>
</feature>
<feature type="transmembrane region" description="Helical; Name=I" evidence="3">
    <location>
        <begin position="15"/>
        <end position="45"/>
    </location>
</feature>
<feature type="topological domain" description="Mitochondrial matrix" evidence="3">
    <location>
        <begin position="46"/>
        <end position="59"/>
    </location>
</feature>
<feature type="transmembrane region" description="Helical; Name=II" evidence="3">
    <location>
        <begin position="60"/>
        <end position="87"/>
    </location>
</feature>
<feature type="topological domain" description="Mitochondrial intermembrane" evidence="3">
    <location>
        <begin position="88"/>
        <end position="227"/>
    </location>
</feature>
<feature type="binding site" evidence="3">
    <location>
        <position position="161"/>
    </location>
    <ligand>
        <name>Cu cation</name>
        <dbReference type="ChEBI" id="CHEBI:23378"/>
        <label>A1</label>
    </ligand>
</feature>
<feature type="binding site" evidence="3">
    <location>
        <position position="196"/>
    </location>
    <ligand>
        <name>Cu cation</name>
        <dbReference type="ChEBI" id="CHEBI:23378"/>
        <label>A1</label>
    </ligand>
</feature>
<feature type="binding site" evidence="3">
    <location>
        <position position="196"/>
    </location>
    <ligand>
        <name>Cu cation</name>
        <dbReference type="ChEBI" id="CHEBI:23378"/>
        <label>A2</label>
    </ligand>
</feature>
<feature type="binding site" evidence="3">
    <location>
        <position position="198"/>
    </location>
    <ligand>
        <name>Cu cation</name>
        <dbReference type="ChEBI" id="CHEBI:23378"/>
        <label>A2</label>
    </ligand>
</feature>
<feature type="binding site" evidence="3">
    <location>
        <position position="198"/>
    </location>
    <ligand>
        <name>Mg(2+)</name>
        <dbReference type="ChEBI" id="CHEBI:18420"/>
        <note>ligand shared with MT-CO1</note>
    </ligand>
</feature>
<feature type="binding site" evidence="3">
    <location>
        <position position="200"/>
    </location>
    <ligand>
        <name>Cu cation</name>
        <dbReference type="ChEBI" id="CHEBI:23378"/>
        <label>A1</label>
    </ligand>
</feature>
<feature type="binding site" evidence="3">
    <location>
        <position position="200"/>
    </location>
    <ligand>
        <name>Cu cation</name>
        <dbReference type="ChEBI" id="CHEBI:23378"/>
        <label>A2</label>
    </ligand>
</feature>
<feature type="binding site" evidence="3">
    <location>
        <position position="204"/>
    </location>
    <ligand>
        <name>Cu cation</name>
        <dbReference type="ChEBI" id="CHEBI:23378"/>
        <label>A2</label>
    </ligand>
</feature>
<feature type="binding site" evidence="3">
    <location>
        <position position="207"/>
    </location>
    <ligand>
        <name>Cu cation</name>
        <dbReference type="ChEBI" id="CHEBI:23378"/>
        <label>A1</label>
    </ligand>
</feature>
<accession>Q38S50</accession>